<feature type="chain" id="PRO_0000199977" description="Gas vesicle protein A">
    <location>
        <begin position="1"/>
        <end position="66" status="greater than"/>
    </location>
</feature>
<feature type="unsure residue" description="L or D">
    <location>
        <position position="63"/>
    </location>
</feature>
<feature type="non-terminal residue">
    <location>
        <position position="66"/>
    </location>
</feature>
<comment type="function">
    <text evidence="1">Gas vesicles are hollow, gas filled proteinaceous nanostructures found in some microorganisms. During planktonic growth they allow positioning of the organism at a favorable depth for light or nutrient acquisition. GvpA forms the protein shell.</text>
</comment>
<comment type="subunit">
    <text evidence="1">The gas vesicle shell is 2 nm thick and consists of a single layer of this protein. It forms helical ribs nearly perpendicular to the long axis of the vesicle.</text>
</comment>
<comment type="subcellular location">
    <subcellularLocation>
        <location evidence="1 2">Gas vesicle shell</location>
    </subcellularLocation>
</comment>
<comment type="similarity">
    <text evidence="1">Belongs to the gas vesicle GvpA family.</text>
</comment>
<proteinExistence type="evidence at protein level"/>
<protein>
    <recommendedName>
        <fullName evidence="1">Gas vesicle protein A</fullName>
        <shortName evidence="1 3">GvpA</shortName>
    </recommendedName>
    <alternativeName>
        <fullName evidence="3">Gas vesicle structural protein</fullName>
    </alternativeName>
</protein>
<evidence type="ECO:0000255" key="1">
    <source>
        <dbReference type="HAMAP-Rule" id="MF_00576"/>
    </source>
</evidence>
<evidence type="ECO:0000269" key="2">
    <source>
    </source>
</evidence>
<evidence type="ECO:0000303" key="3">
    <source>
    </source>
</evidence>
<dbReference type="SMR" id="P80998"/>
<dbReference type="GO" id="GO:0031411">
    <property type="term" value="C:gas vesicle"/>
    <property type="evidence" value="ECO:0007669"/>
    <property type="project" value="UniProtKB-KW"/>
</dbReference>
<dbReference type="GO" id="GO:0012506">
    <property type="term" value="C:vesicle membrane"/>
    <property type="evidence" value="ECO:0007669"/>
    <property type="project" value="InterPro"/>
</dbReference>
<dbReference type="GO" id="GO:0005198">
    <property type="term" value="F:structural molecule activity"/>
    <property type="evidence" value="ECO:0007669"/>
    <property type="project" value="InterPro"/>
</dbReference>
<dbReference type="InterPro" id="IPR000638">
    <property type="entry name" value="Gas-vesicle_GvpA-like"/>
</dbReference>
<dbReference type="InterPro" id="IPR050530">
    <property type="entry name" value="GvpA"/>
</dbReference>
<dbReference type="InterPro" id="IPR018493">
    <property type="entry name" value="GvpA-like_CS"/>
</dbReference>
<dbReference type="NCBIfam" id="NF006874">
    <property type="entry name" value="PRK09371.1"/>
    <property type="match status" value="1"/>
</dbReference>
<dbReference type="PANTHER" id="PTHR35344:SF4">
    <property type="entry name" value="GAS VESICLE PROTEIN A1"/>
    <property type="match status" value="1"/>
</dbReference>
<dbReference type="PANTHER" id="PTHR35344">
    <property type="entry name" value="GAS VESICLE STRUCTURAL PROTEIN 2-RELATED"/>
    <property type="match status" value="1"/>
</dbReference>
<dbReference type="Pfam" id="PF00741">
    <property type="entry name" value="Gas_vesicle"/>
    <property type="match status" value="1"/>
</dbReference>
<dbReference type="PROSITE" id="PS00234">
    <property type="entry name" value="GAS_VESICLE_A_1"/>
    <property type="match status" value="1"/>
</dbReference>
<dbReference type="PROSITE" id="PS00669">
    <property type="entry name" value="GAS_VESICLE_A_2"/>
    <property type="match status" value="1"/>
</dbReference>
<gene>
    <name evidence="1 3" type="primary">gvpA</name>
</gene>
<name>GVPA_THIPN</name>
<reference key="1">
    <citation type="journal article" date="1992" name="J. Gen. Microbiol.">
        <title>The homologies of gas vesicle proteins.</title>
        <authorList>
            <person name="Griffiths A.E."/>
            <person name="Walsby A.E."/>
            <person name="Hayes P.K."/>
        </authorList>
    </citation>
    <scope>PROTEIN SEQUENCE</scope>
    <scope>SUBCELLULAR LOCATION</scope>
    <source>
        <strain>Konstanz 5813</strain>
    </source>
</reference>
<organism>
    <name type="scientific">Thiocapsa pendens</name>
    <name type="common">Amoebobacter pendens</name>
    <dbReference type="NCBI Taxonomy" id="12934"/>
    <lineage>
        <taxon>Bacteria</taxon>
        <taxon>Pseudomonadati</taxon>
        <taxon>Pseudomonadota</taxon>
        <taxon>Gammaproteobacteria</taxon>
        <taxon>Chromatiales</taxon>
        <taxon>Chromatiaceae</taxon>
        <taxon>Thiocapsa</taxon>
    </lineage>
</organism>
<accession>P80998</accession>
<keyword id="KW-0903">Direct protein sequencing</keyword>
<keyword id="KW-0304">Gas vesicle</keyword>
<sequence>AKVANSTDSSSLAEVIDRILDKGIVIDAWVKVSLVGIELLAIEARVVVASVETYLKYAEAIGLTIP</sequence>